<feature type="chain" id="PRO_1000094379" description="Shikimate kinase">
    <location>
        <begin position="1"/>
        <end position="187"/>
    </location>
</feature>
<feature type="binding site" evidence="1">
    <location>
        <begin position="14"/>
        <end position="19"/>
    </location>
    <ligand>
        <name>ATP</name>
        <dbReference type="ChEBI" id="CHEBI:30616"/>
    </ligand>
</feature>
<feature type="binding site" evidence="1">
    <location>
        <position position="18"/>
    </location>
    <ligand>
        <name>Mg(2+)</name>
        <dbReference type="ChEBI" id="CHEBI:18420"/>
    </ligand>
</feature>
<feature type="binding site" evidence="1">
    <location>
        <position position="36"/>
    </location>
    <ligand>
        <name>substrate</name>
    </ligand>
</feature>
<feature type="binding site" evidence="1">
    <location>
        <position position="60"/>
    </location>
    <ligand>
        <name>substrate</name>
    </ligand>
</feature>
<feature type="binding site" evidence="1">
    <location>
        <position position="82"/>
    </location>
    <ligand>
        <name>substrate</name>
    </ligand>
</feature>
<feature type="binding site" evidence="1">
    <location>
        <position position="120"/>
    </location>
    <ligand>
        <name>ATP</name>
        <dbReference type="ChEBI" id="CHEBI:30616"/>
    </ligand>
</feature>
<feature type="binding site" evidence="1">
    <location>
        <position position="147"/>
    </location>
    <ligand>
        <name>substrate</name>
    </ligand>
</feature>
<evidence type="ECO:0000255" key="1">
    <source>
        <dbReference type="HAMAP-Rule" id="MF_00109"/>
    </source>
</evidence>
<organism>
    <name type="scientific">Chloroherpeton thalassium (strain ATCC 35110 / GB-78)</name>
    <dbReference type="NCBI Taxonomy" id="517418"/>
    <lineage>
        <taxon>Bacteria</taxon>
        <taxon>Pseudomonadati</taxon>
        <taxon>Chlorobiota</taxon>
        <taxon>Chlorobiia</taxon>
        <taxon>Chlorobiales</taxon>
        <taxon>Chloroherpetonaceae</taxon>
        <taxon>Chloroherpeton</taxon>
    </lineage>
</organism>
<reference key="1">
    <citation type="submission" date="2008-06" db="EMBL/GenBank/DDBJ databases">
        <title>Complete sequence of Chloroherpeton thalassium ATCC 35110.</title>
        <authorList>
            <consortium name="US DOE Joint Genome Institute"/>
            <person name="Lucas S."/>
            <person name="Copeland A."/>
            <person name="Lapidus A."/>
            <person name="Glavina del Rio T."/>
            <person name="Dalin E."/>
            <person name="Tice H."/>
            <person name="Bruce D."/>
            <person name="Goodwin L."/>
            <person name="Pitluck S."/>
            <person name="Schmutz J."/>
            <person name="Larimer F."/>
            <person name="Land M."/>
            <person name="Hauser L."/>
            <person name="Kyrpides N."/>
            <person name="Mikhailova N."/>
            <person name="Liu Z."/>
            <person name="Li T."/>
            <person name="Zhao F."/>
            <person name="Overmann J."/>
            <person name="Bryant D.A."/>
            <person name="Richardson P."/>
        </authorList>
    </citation>
    <scope>NUCLEOTIDE SEQUENCE [LARGE SCALE GENOMIC DNA]</scope>
    <source>
        <strain>ATCC 35110 / GB-78</strain>
    </source>
</reference>
<protein>
    <recommendedName>
        <fullName evidence="1">Shikimate kinase</fullName>
        <shortName evidence="1">SK</shortName>
        <ecNumber evidence="1">2.7.1.71</ecNumber>
    </recommendedName>
</protein>
<dbReference type="EC" id="2.7.1.71" evidence="1"/>
<dbReference type="EMBL" id="CP001100">
    <property type="protein sequence ID" value="ACF12642.1"/>
    <property type="molecule type" value="Genomic_DNA"/>
</dbReference>
<dbReference type="RefSeq" id="WP_012498726.1">
    <property type="nucleotide sequence ID" value="NC_011026.1"/>
</dbReference>
<dbReference type="SMR" id="B3QSZ9"/>
<dbReference type="STRING" id="517418.Ctha_0171"/>
<dbReference type="KEGG" id="cts:Ctha_0171"/>
<dbReference type="eggNOG" id="COG0703">
    <property type="taxonomic scope" value="Bacteria"/>
</dbReference>
<dbReference type="HOGENOM" id="CLU_057607_2_1_10"/>
<dbReference type="OrthoDB" id="9800332at2"/>
<dbReference type="UniPathway" id="UPA00053">
    <property type="reaction ID" value="UER00088"/>
</dbReference>
<dbReference type="Proteomes" id="UP000001208">
    <property type="component" value="Chromosome"/>
</dbReference>
<dbReference type="GO" id="GO:0005829">
    <property type="term" value="C:cytosol"/>
    <property type="evidence" value="ECO:0007669"/>
    <property type="project" value="TreeGrafter"/>
</dbReference>
<dbReference type="GO" id="GO:0005524">
    <property type="term" value="F:ATP binding"/>
    <property type="evidence" value="ECO:0007669"/>
    <property type="project" value="UniProtKB-UniRule"/>
</dbReference>
<dbReference type="GO" id="GO:0000287">
    <property type="term" value="F:magnesium ion binding"/>
    <property type="evidence" value="ECO:0007669"/>
    <property type="project" value="UniProtKB-UniRule"/>
</dbReference>
<dbReference type="GO" id="GO:0004765">
    <property type="term" value="F:shikimate kinase activity"/>
    <property type="evidence" value="ECO:0007669"/>
    <property type="project" value="UniProtKB-UniRule"/>
</dbReference>
<dbReference type="GO" id="GO:0008652">
    <property type="term" value="P:amino acid biosynthetic process"/>
    <property type="evidence" value="ECO:0007669"/>
    <property type="project" value="UniProtKB-KW"/>
</dbReference>
<dbReference type="GO" id="GO:0009073">
    <property type="term" value="P:aromatic amino acid family biosynthetic process"/>
    <property type="evidence" value="ECO:0007669"/>
    <property type="project" value="UniProtKB-KW"/>
</dbReference>
<dbReference type="GO" id="GO:0009423">
    <property type="term" value="P:chorismate biosynthetic process"/>
    <property type="evidence" value="ECO:0007669"/>
    <property type="project" value="UniProtKB-UniRule"/>
</dbReference>
<dbReference type="CDD" id="cd00464">
    <property type="entry name" value="SK"/>
    <property type="match status" value="1"/>
</dbReference>
<dbReference type="Gene3D" id="3.40.50.300">
    <property type="entry name" value="P-loop containing nucleotide triphosphate hydrolases"/>
    <property type="match status" value="1"/>
</dbReference>
<dbReference type="HAMAP" id="MF_00109">
    <property type="entry name" value="Shikimate_kinase"/>
    <property type="match status" value="1"/>
</dbReference>
<dbReference type="InterPro" id="IPR027417">
    <property type="entry name" value="P-loop_NTPase"/>
</dbReference>
<dbReference type="InterPro" id="IPR031322">
    <property type="entry name" value="Shikimate/glucono_kinase"/>
</dbReference>
<dbReference type="InterPro" id="IPR000623">
    <property type="entry name" value="Shikimate_kinase/TSH1"/>
</dbReference>
<dbReference type="InterPro" id="IPR023000">
    <property type="entry name" value="Shikimate_kinase_CS"/>
</dbReference>
<dbReference type="PANTHER" id="PTHR21087">
    <property type="entry name" value="SHIKIMATE KINASE"/>
    <property type="match status" value="1"/>
</dbReference>
<dbReference type="PANTHER" id="PTHR21087:SF16">
    <property type="entry name" value="SHIKIMATE KINASE 1, CHLOROPLASTIC"/>
    <property type="match status" value="1"/>
</dbReference>
<dbReference type="Pfam" id="PF01202">
    <property type="entry name" value="SKI"/>
    <property type="match status" value="1"/>
</dbReference>
<dbReference type="PRINTS" id="PR01100">
    <property type="entry name" value="SHIKIMTKNASE"/>
</dbReference>
<dbReference type="SUPFAM" id="SSF52540">
    <property type="entry name" value="P-loop containing nucleoside triphosphate hydrolases"/>
    <property type="match status" value="1"/>
</dbReference>
<dbReference type="PROSITE" id="PS01128">
    <property type="entry name" value="SHIKIMATE_KINASE"/>
    <property type="match status" value="1"/>
</dbReference>
<accession>B3QSZ9</accession>
<sequence length="187" mass="20994">MKKPSLIFLTGFSTSGKSTIGPLLANSLGFEFIDIDKEIVDREQKSINEIFAEKGEPYFRELEYNVLSSISQSEDLVVALGGGTLENDKCFEFIRKAGTLVYLKSDVATLARRLSHKEDRPLMKGENGEKLSIEDISDRVEKLLAKREPRYSAAEILALTDKTPLGVTIENLTRQIERHIRANCKTN</sequence>
<proteinExistence type="inferred from homology"/>
<comment type="function">
    <text evidence="1">Catalyzes the specific phosphorylation of the 3-hydroxyl group of shikimic acid using ATP as a cosubstrate.</text>
</comment>
<comment type="catalytic activity">
    <reaction evidence="1">
        <text>shikimate + ATP = 3-phosphoshikimate + ADP + H(+)</text>
        <dbReference type="Rhea" id="RHEA:13121"/>
        <dbReference type="ChEBI" id="CHEBI:15378"/>
        <dbReference type="ChEBI" id="CHEBI:30616"/>
        <dbReference type="ChEBI" id="CHEBI:36208"/>
        <dbReference type="ChEBI" id="CHEBI:145989"/>
        <dbReference type="ChEBI" id="CHEBI:456216"/>
        <dbReference type="EC" id="2.7.1.71"/>
    </reaction>
</comment>
<comment type="cofactor">
    <cofactor evidence="1">
        <name>Mg(2+)</name>
        <dbReference type="ChEBI" id="CHEBI:18420"/>
    </cofactor>
    <text evidence="1">Binds 1 Mg(2+) ion per subunit.</text>
</comment>
<comment type="pathway">
    <text evidence="1">Metabolic intermediate biosynthesis; chorismate biosynthesis; chorismate from D-erythrose 4-phosphate and phosphoenolpyruvate: step 5/7.</text>
</comment>
<comment type="subunit">
    <text evidence="1">Monomer.</text>
</comment>
<comment type="subcellular location">
    <subcellularLocation>
        <location evidence="1">Cytoplasm</location>
    </subcellularLocation>
</comment>
<comment type="similarity">
    <text evidence="1">Belongs to the shikimate kinase family.</text>
</comment>
<name>AROK_CHLT3</name>
<gene>
    <name evidence="1" type="primary">aroK</name>
    <name type="ordered locus">Ctha_0171</name>
</gene>
<keyword id="KW-0028">Amino-acid biosynthesis</keyword>
<keyword id="KW-0057">Aromatic amino acid biosynthesis</keyword>
<keyword id="KW-0067">ATP-binding</keyword>
<keyword id="KW-0963">Cytoplasm</keyword>
<keyword id="KW-0418">Kinase</keyword>
<keyword id="KW-0460">Magnesium</keyword>
<keyword id="KW-0479">Metal-binding</keyword>
<keyword id="KW-0547">Nucleotide-binding</keyword>
<keyword id="KW-1185">Reference proteome</keyword>
<keyword id="KW-0808">Transferase</keyword>